<protein>
    <recommendedName>
        <fullName evidence="1">ATP synthase subunit a</fullName>
    </recommendedName>
    <alternativeName>
        <fullName evidence="1">ATP synthase F0 sector subunit a</fullName>
    </alternativeName>
    <alternativeName>
        <fullName evidence="1">F-ATPase subunit 6</fullName>
    </alternativeName>
</protein>
<proteinExistence type="inferred from homology"/>
<organism>
    <name type="scientific">Bdellovibrio bacteriovorus (strain ATCC 15356 / DSM 50701 / NCIMB 9529 / HD100)</name>
    <dbReference type="NCBI Taxonomy" id="264462"/>
    <lineage>
        <taxon>Bacteria</taxon>
        <taxon>Pseudomonadati</taxon>
        <taxon>Bdellovibrionota</taxon>
        <taxon>Bdellovibrionia</taxon>
        <taxon>Bdellovibrionales</taxon>
        <taxon>Pseudobdellovibrionaceae</taxon>
        <taxon>Bdellovibrio</taxon>
    </lineage>
</organism>
<keyword id="KW-0066">ATP synthesis</keyword>
<keyword id="KW-0997">Cell inner membrane</keyword>
<keyword id="KW-1003">Cell membrane</keyword>
<keyword id="KW-0138">CF(0)</keyword>
<keyword id="KW-0375">Hydrogen ion transport</keyword>
<keyword id="KW-0406">Ion transport</keyword>
<keyword id="KW-0472">Membrane</keyword>
<keyword id="KW-1185">Reference proteome</keyword>
<keyword id="KW-0812">Transmembrane</keyword>
<keyword id="KW-1133">Transmembrane helix</keyword>
<keyword id="KW-0813">Transport</keyword>
<feature type="chain" id="PRO_0000362244" description="ATP synthase subunit a">
    <location>
        <begin position="1"/>
        <end position="229"/>
    </location>
</feature>
<feature type="transmembrane region" description="Helical" evidence="1">
    <location>
        <begin position="16"/>
        <end position="36"/>
    </location>
</feature>
<feature type="transmembrane region" description="Helical" evidence="1">
    <location>
        <begin position="81"/>
        <end position="101"/>
    </location>
</feature>
<feature type="transmembrane region" description="Helical" evidence="1">
    <location>
        <begin position="110"/>
        <end position="130"/>
    </location>
</feature>
<feature type="transmembrane region" description="Helical" evidence="1">
    <location>
        <begin position="142"/>
        <end position="162"/>
    </location>
</feature>
<feature type="transmembrane region" description="Helical" evidence="1">
    <location>
        <begin position="175"/>
        <end position="195"/>
    </location>
</feature>
<feature type="transmembrane region" description="Helical" evidence="1">
    <location>
        <begin position="196"/>
        <end position="216"/>
    </location>
</feature>
<sequence>MSFNWTQLVPGVGHEYAHVATLGIATVAAVGIGAAARASLGKGEAAVLPASKFSLRGIFELLTEMTSGLADMVIGEHGKHYIPFFASVFFFILFNNLLGMIPGMTPATENMNTTFGFGVLMFLFYNFQGVKENGPVAYLKHFMGPVIFLAPLMFVIEIVSHIVRPFSLGLRLANVMMGDHTVLSVFLDLVPIGVPIPFYVMGLFVCFVQAFVFTLLSMVYVAFAIAHDH</sequence>
<name>ATP6_BDEBA</name>
<reference key="1">
    <citation type="journal article" date="2004" name="Science">
        <title>A predator unmasked: life cycle of Bdellovibrio bacteriovorus from a genomic perspective.</title>
        <authorList>
            <person name="Rendulic S."/>
            <person name="Jagtap P."/>
            <person name="Rosinus A."/>
            <person name="Eppinger M."/>
            <person name="Baar C."/>
            <person name="Lanz C."/>
            <person name="Keller H."/>
            <person name="Lambert C."/>
            <person name="Evans K.J."/>
            <person name="Goesmann A."/>
            <person name="Meyer F."/>
            <person name="Sockett R.E."/>
            <person name="Schuster S.C."/>
        </authorList>
    </citation>
    <scope>NUCLEOTIDE SEQUENCE [LARGE SCALE GENOMIC DNA]</scope>
    <source>
        <strain>ATCC 15356 / DSM 50701 / NCIMB 9529 / HD100</strain>
    </source>
</reference>
<accession>Q6MRR3</accession>
<evidence type="ECO:0000255" key="1">
    <source>
        <dbReference type="HAMAP-Rule" id="MF_01393"/>
    </source>
</evidence>
<gene>
    <name evidence="1" type="primary">atpB</name>
    <name type="ordered locus">Bd0009</name>
</gene>
<dbReference type="EMBL" id="BX842646">
    <property type="protein sequence ID" value="CAE77693.1"/>
    <property type="molecule type" value="Genomic_DNA"/>
</dbReference>
<dbReference type="RefSeq" id="WP_011162634.1">
    <property type="nucleotide sequence ID" value="NC_005363.1"/>
</dbReference>
<dbReference type="SMR" id="Q6MRR3"/>
<dbReference type="STRING" id="264462.Bd0009"/>
<dbReference type="GeneID" id="93011165"/>
<dbReference type="KEGG" id="bba:Bd0009"/>
<dbReference type="eggNOG" id="COG0356">
    <property type="taxonomic scope" value="Bacteria"/>
</dbReference>
<dbReference type="HOGENOM" id="CLU_041018_2_2_7"/>
<dbReference type="Proteomes" id="UP000008080">
    <property type="component" value="Chromosome"/>
</dbReference>
<dbReference type="GO" id="GO:0005886">
    <property type="term" value="C:plasma membrane"/>
    <property type="evidence" value="ECO:0007669"/>
    <property type="project" value="UniProtKB-SubCell"/>
</dbReference>
<dbReference type="GO" id="GO:0045259">
    <property type="term" value="C:proton-transporting ATP synthase complex"/>
    <property type="evidence" value="ECO:0007669"/>
    <property type="project" value="UniProtKB-KW"/>
</dbReference>
<dbReference type="GO" id="GO:0046933">
    <property type="term" value="F:proton-transporting ATP synthase activity, rotational mechanism"/>
    <property type="evidence" value="ECO:0007669"/>
    <property type="project" value="UniProtKB-UniRule"/>
</dbReference>
<dbReference type="GO" id="GO:0042777">
    <property type="term" value="P:proton motive force-driven plasma membrane ATP synthesis"/>
    <property type="evidence" value="ECO:0007669"/>
    <property type="project" value="TreeGrafter"/>
</dbReference>
<dbReference type="CDD" id="cd00310">
    <property type="entry name" value="ATP-synt_Fo_a_6"/>
    <property type="match status" value="1"/>
</dbReference>
<dbReference type="Gene3D" id="1.20.120.220">
    <property type="entry name" value="ATP synthase, F0 complex, subunit A"/>
    <property type="match status" value="1"/>
</dbReference>
<dbReference type="HAMAP" id="MF_01393">
    <property type="entry name" value="ATP_synth_a_bact"/>
    <property type="match status" value="1"/>
</dbReference>
<dbReference type="InterPro" id="IPR045082">
    <property type="entry name" value="ATP_syn_F0_a_bact/chloroplast"/>
</dbReference>
<dbReference type="InterPro" id="IPR000568">
    <property type="entry name" value="ATP_synth_F0_asu"/>
</dbReference>
<dbReference type="InterPro" id="IPR035908">
    <property type="entry name" value="F0_ATP_A_sf"/>
</dbReference>
<dbReference type="NCBIfam" id="TIGR01131">
    <property type="entry name" value="ATP_synt_6_or_A"/>
    <property type="match status" value="1"/>
</dbReference>
<dbReference type="PANTHER" id="PTHR42823">
    <property type="entry name" value="ATP SYNTHASE SUBUNIT A, CHLOROPLASTIC"/>
    <property type="match status" value="1"/>
</dbReference>
<dbReference type="PANTHER" id="PTHR42823:SF3">
    <property type="entry name" value="ATP SYNTHASE SUBUNIT A, CHLOROPLASTIC"/>
    <property type="match status" value="1"/>
</dbReference>
<dbReference type="Pfam" id="PF00119">
    <property type="entry name" value="ATP-synt_A"/>
    <property type="match status" value="1"/>
</dbReference>
<dbReference type="PRINTS" id="PR00123">
    <property type="entry name" value="ATPASEA"/>
</dbReference>
<dbReference type="SUPFAM" id="SSF81336">
    <property type="entry name" value="F1F0 ATP synthase subunit A"/>
    <property type="match status" value="1"/>
</dbReference>
<comment type="function">
    <text evidence="1">Key component of the proton channel; it plays a direct role in the translocation of protons across the membrane.</text>
</comment>
<comment type="subunit">
    <text evidence="1">F-type ATPases have 2 components, CF(1) - the catalytic core - and CF(0) - the membrane proton channel. CF(1) has five subunits: alpha(3), beta(3), gamma(1), delta(1), epsilon(1). CF(0) has three main subunits: a(1), b(2) and c(9-12). The alpha and beta chains form an alternating ring which encloses part of the gamma chain. CF(1) is attached to CF(0) by a central stalk formed by the gamma and epsilon chains, while a peripheral stalk is formed by the delta and b chains.</text>
</comment>
<comment type="subcellular location">
    <subcellularLocation>
        <location evidence="1">Cell inner membrane</location>
        <topology evidence="1">Multi-pass membrane protein</topology>
    </subcellularLocation>
</comment>
<comment type="similarity">
    <text evidence="1">Belongs to the ATPase A chain family.</text>
</comment>